<keyword id="KW-0687">Ribonucleoprotein</keyword>
<keyword id="KW-0689">Ribosomal protein</keyword>
<keyword id="KW-0694">RNA-binding</keyword>
<keyword id="KW-0699">rRNA-binding</keyword>
<evidence type="ECO:0000255" key="1">
    <source>
        <dbReference type="HAMAP-Rule" id="MF_01302"/>
    </source>
</evidence>
<evidence type="ECO:0000305" key="2"/>
<dbReference type="EMBL" id="CT573326">
    <property type="protein sequence ID" value="CAK13450.1"/>
    <property type="molecule type" value="Genomic_DNA"/>
</dbReference>
<dbReference type="RefSeq" id="WP_011531891.1">
    <property type="nucleotide sequence ID" value="NC_008027.1"/>
</dbReference>
<dbReference type="SMR" id="Q1IFV2"/>
<dbReference type="STRING" id="384676.PSEEN0504"/>
<dbReference type="GeneID" id="32803838"/>
<dbReference type="KEGG" id="pen:PSEEN0504"/>
<dbReference type="eggNOG" id="COG0096">
    <property type="taxonomic scope" value="Bacteria"/>
</dbReference>
<dbReference type="HOGENOM" id="CLU_098428_0_0_6"/>
<dbReference type="OrthoDB" id="9802617at2"/>
<dbReference type="Proteomes" id="UP000000658">
    <property type="component" value="Chromosome"/>
</dbReference>
<dbReference type="GO" id="GO:1990904">
    <property type="term" value="C:ribonucleoprotein complex"/>
    <property type="evidence" value="ECO:0007669"/>
    <property type="project" value="UniProtKB-KW"/>
</dbReference>
<dbReference type="GO" id="GO:0005840">
    <property type="term" value="C:ribosome"/>
    <property type="evidence" value="ECO:0007669"/>
    <property type="project" value="UniProtKB-KW"/>
</dbReference>
<dbReference type="GO" id="GO:0019843">
    <property type="term" value="F:rRNA binding"/>
    <property type="evidence" value="ECO:0007669"/>
    <property type="project" value="UniProtKB-UniRule"/>
</dbReference>
<dbReference type="GO" id="GO:0003735">
    <property type="term" value="F:structural constituent of ribosome"/>
    <property type="evidence" value="ECO:0007669"/>
    <property type="project" value="InterPro"/>
</dbReference>
<dbReference type="GO" id="GO:0006412">
    <property type="term" value="P:translation"/>
    <property type="evidence" value="ECO:0007669"/>
    <property type="project" value="UniProtKB-UniRule"/>
</dbReference>
<dbReference type="FunFam" id="3.30.1370.30:FF:000003">
    <property type="entry name" value="30S ribosomal protein S8"/>
    <property type="match status" value="1"/>
</dbReference>
<dbReference type="FunFam" id="3.30.1490.10:FF:000001">
    <property type="entry name" value="30S ribosomal protein S8"/>
    <property type="match status" value="1"/>
</dbReference>
<dbReference type="Gene3D" id="3.30.1370.30">
    <property type="match status" value="1"/>
</dbReference>
<dbReference type="Gene3D" id="3.30.1490.10">
    <property type="match status" value="1"/>
</dbReference>
<dbReference type="HAMAP" id="MF_01302_B">
    <property type="entry name" value="Ribosomal_uS8_B"/>
    <property type="match status" value="1"/>
</dbReference>
<dbReference type="InterPro" id="IPR000630">
    <property type="entry name" value="Ribosomal_uS8"/>
</dbReference>
<dbReference type="InterPro" id="IPR047863">
    <property type="entry name" value="Ribosomal_uS8_CS"/>
</dbReference>
<dbReference type="InterPro" id="IPR035987">
    <property type="entry name" value="Ribosomal_uS8_sf"/>
</dbReference>
<dbReference type="NCBIfam" id="NF001109">
    <property type="entry name" value="PRK00136.1"/>
    <property type="match status" value="1"/>
</dbReference>
<dbReference type="PANTHER" id="PTHR11758">
    <property type="entry name" value="40S RIBOSOMAL PROTEIN S15A"/>
    <property type="match status" value="1"/>
</dbReference>
<dbReference type="Pfam" id="PF00410">
    <property type="entry name" value="Ribosomal_S8"/>
    <property type="match status" value="1"/>
</dbReference>
<dbReference type="SUPFAM" id="SSF56047">
    <property type="entry name" value="Ribosomal protein S8"/>
    <property type="match status" value="1"/>
</dbReference>
<dbReference type="PROSITE" id="PS00053">
    <property type="entry name" value="RIBOSOMAL_S8"/>
    <property type="match status" value="1"/>
</dbReference>
<gene>
    <name evidence="1" type="primary">rpsH</name>
    <name type="ordered locus">PSEEN0504</name>
</gene>
<organism>
    <name type="scientific">Pseudomonas entomophila (strain L48)</name>
    <dbReference type="NCBI Taxonomy" id="384676"/>
    <lineage>
        <taxon>Bacteria</taxon>
        <taxon>Pseudomonadati</taxon>
        <taxon>Pseudomonadota</taxon>
        <taxon>Gammaproteobacteria</taxon>
        <taxon>Pseudomonadales</taxon>
        <taxon>Pseudomonadaceae</taxon>
        <taxon>Pseudomonas</taxon>
    </lineage>
</organism>
<protein>
    <recommendedName>
        <fullName evidence="1">Small ribosomal subunit protein uS8</fullName>
    </recommendedName>
    <alternativeName>
        <fullName evidence="2">30S ribosomal protein S8</fullName>
    </alternativeName>
</protein>
<accession>Q1IFV2</accession>
<comment type="function">
    <text evidence="1">One of the primary rRNA binding proteins, it binds directly to 16S rRNA central domain where it helps coordinate assembly of the platform of the 30S subunit.</text>
</comment>
<comment type="subunit">
    <text evidence="1">Part of the 30S ribosomal subunit. Contacts proteins S5 and S12.</text>
</comment>
<comment type="similarity">
    <text evidence="1">Belongs to the universal ribosomal protein uS8 family.</text>
</comment>
<feature type="chain" id="PRO_0000290905" description="Small ribosomal subunit protein uS8">
    <location>
        <begin position="1"/>
        <end position="130"/>
    </location>
</feature>
<proteinExistence type="inferred from homology"/>
<sequence length="130" mass="13976">MSMQDPLADMLTRIRNAQMAEKSVVSMPSSTLKVAVAKVLKDEGYIAGYEVTGEAKPSLSIELKYFEGRPVIEELKRSSRPGLRQYKAVSELPKVRGGLGVSIVSTNKGVMTDRAARAAGVGGEVLCTVF</sequence>
<name>RS8_PSEE4</name>
<reference key="1">
    <citation type="journal article" date="2006" name="Nat. Biotechnol.">
        <title>Complete genome sequence of the entomopathogenic and metabolically versatile soil bacterium Pseudomonas entomophila.</title>
        <authorList>
            <person name="Vodovar N."/>
            <person name="Vallenet D."/>
            <person name="Cruveiller S."/>
            <person name="Rouy Z."/>
            <person name="Barbe V."/>
            <person name="Acosta C."/>
            <person name="Cattolico L."/>
            <person name="Jubin C."/>
            <person name="Lajus A."/>
            <person name="Segurens B."/>
            <person name="Vacherie B."/>
            <person name="Wincker P."/>
            <person name="Weissenbach J."/>
            <person name="Lemaitre B."/>
            <person name="Medigue C."/>
            <person name="Boccard F."/>
        </authorList>
    </citation>
    <scope>NUCLEOTIDE SEQUENCE [LARGE SCALE GENOMIC DNA]</scope>
    <source>
        <strain>L48</strain>
    </source>
</reference>